<comment type="subcellular location">
    <subcellularLocation>
        <location>Cell inner membrane</location>
        <topology>Multi-pass membrane protein</topology>
    </subcellularLocation>
</comment>
<comment type="similarity">
    <text evidence="2">Belongs to the DoxX family.</text>
</comment>
<comment type="sequence caution" evidence="2">
    <conflict type="erroneous initiation">
        <sequence resource="EMBL-CDS" id="AAA57905"/>
    </conflict>
    <text>Extended N-terminus.</text>
</comment>
<dbReference type="EMBL" id="U18997">
    <property type="protein sequence ID" value="AAA57905.1"/>
    <property type="status" value="ALT_INIT"/>
    <property type="molecule type" value="Genomic_DNA"/>
</dbReference>
<dbReference type="EMBL" id="U00096">
    <property type="protein sequence ID" value="AAC76136.2"/>
    <property type="molecule type" value="Genomic_DNA"/>
</dbReference>
<dbReference type="EMBL" id="AP009048">
    <property type="protein sequence ID" value="BAE77151.1"/>
    <property type="molecule type" value="Genomic_DNA"/>
</dbReference>
<dbReference type="RefSeq" id="NP_417572.2">
    <property type="nucleotide sequence ID" value="NC_000913.3"/>
</dbReference>
<dbReference type="RefSeq" id="WP_000732240.1">
    <property type="nucleotide sequence ID" value="NZ_STEB01000001.1"/>
</dbReference>
<dbReference type="BioGRID" id="4259661">
    <property type="interactions" value="3"/>
</dbReference>
<dbReference type="FunCoup" id="P42619">
    <property type="interactions" value="236"/>
</dbReference>
<dbReference type="STRING" id="511145.b3101"/>
<dbReference type="PaxDb" id="511145-b3101"/>
<dbReference type="EnsemblBacteria" id="AAC76136">
    <property type="protein sequence ID" value="AAC76136"/>
    <property type="gene ID" value="b3101"/>
</dbReference>
<dbReference type="GeneID" id="947608"/>
<dbReference type="KEGG" id="ecj:JW5850"/>
<dbReference type="KEGG" id="eco:b3101"/>
<dbReference type="KEGG" id="ecoc:C3026_16930"/>
<dbReference type="PATRIC" id="fig|511145.12.peg.3197"/>
<dbReference type="EchoBASE" id="EB2601"/>
<dbReference type="eggNOG" id="COG2259">
    <property type="taxonomic scope" value="Bacteria"/>
</dbReference>
<dbReference type="HOGENOM" id="CLU_058421_8_3_6"/>
<dbReference type="InParanoid" id="P42619"/>
<dbReference type="OMA" id="QMIMFMK"/>
<dbReference type="PhylomeDB" id="P42619"/>
<dbReference type="BioCyc" id="EcoCyc:G7615-MONOMER"/>
<dbReference type="PRO" id="PR:P42619"/>
<dbReference type="Proteomes" id="UP000000625">
    <property type="component" value="Chromosome"/>
</dbReference>
<dbReference type="GO" id="GO:0005886">
    <property type="term" value="C:plasma membrane"/>
    <property type="evidence" value="ECO:0000314"/>
    <property type="project" value="EcoCyc"/>
</dbReference>
<dbReference type="InterPro" id="IPR032808">
    <property type="entry name" value="DoxX"/>
</dbReference>
<dbReference type="InterPro" id="IPR051907">
    <property type="entry name" value="DoxX-like_oxidoreductase"/>
</dbReference>
<dbReference type="PANTHER" id="PTHR33452:SF1">
    <property type="entry name" value="INNER MEMBRANE PROTEIN YPHA-RELATED"/>
    <property type="match status" value="1"/>
</dbReference>
<dbReference type="PANTHER" id="PTHR33452">
    <property type="entry name" value="OXIDOREDUCTASE CATD-RELATED"/>
    <property type="match status" value="1"/>
</dbReference>
<dbReference type="Pfam" id="PF07681">
    <property type="entry name" value="DoxX"/>
    <property type="match status" value="1"/>
</dbReference>
<name>YQJF_ECOLI</name>
<accession>P42619</accession>
<accession>Q2M9A5</accession>
<reference key="1">
    <citation type="journal article" date="1997" name="Science">
        <title>The complete genome sequence of Escherichia coli K-12.</title>
        <authorList>
            <person name="Blattner F.R."/>
            <person name="Plunkett G. III"/>
            <person name="Bloch C.A."/>
            <person name="Perna N.T."/>
            <person name="Burland V."/>
            <person name="Riley M."/>
            <person name="Collado-Vides J."/>
            <person name="Glasner J.D."/>
            <person name="Rode C.K."/>
            <person name="Mayhew G.F."/>
            <person name="Gregor J."/>
            <person name="Davis N.W."/>
            <person name="Kirkpatrick H.A."/>
            <person name="Goeden M.A."/>
            <person name="Rose D.J."/>
            <person name="Mau B."/>
            <person name="Shao Y."/>
        </authorList>
    </citation>
    <scope>NUCLEOTIDE SEQUENCE [LARGE SCALE GENOMIC DNA]</scope>
    <source>
        <strain>K12 / MG1655 / ATCC 47076</strain>
    </source>
</reference>
<reference key="2">
    <citation type="journal article" date="2006" name="Mol. Syst. Biol.">
        <title>Highly accurate genome sequences of Escherichia coli K-12 strains MG1655 and W3110.</title>
        <authorList>
            <person name="Hayashi K."/>
            <person name="Morooka N."/>
            <person name="Yamamoto Y."/>
            <person name="Fujita K."/>
            <person name="Isono K."/>
            <person name="Choi S."/>
            <person name="Ohtsubo E."/>
            <person name="Baba T."/>
            <person name="Wanner B.L."/>
            <person name="Mori H."/>
            <person name="Horiuchi T."/>
        </authorList>
    </citation>
    <scope>NUCLEOTIDE SEQUENCE [LARGE SCALE GENOMIC DNA]</scope>
    <source>
        <strain>K12 / W3110 / ATCC 27325 / DSM 5911</strain>
    </source>
</reference>
<reference key="3">
    <citation type="journal article" date="2005" name="Science">
        <title>Global topology analysis of the Escherichia coli inner membrane proteome.</title>
        <authorList>
            <person name="Daley D.O."/>
            <person name="Rapp M."/>
            <person name="Granseth E."/>
            <person name="Melen K."/>
            <person name="Drew D."/>
            <person name="von Heijne G."/>
        </authorList>
    </citation>
    <scope>TOPOLOGY [LARGE SCALE ANALYSIS]</scope>
    <source>
        <strain>K12 / MG1655 / ATCC 47076</strain>
    </source>
</reference>
<feature type="chain" id="PRO_0000169435" description="Inner membrane protein YqjF">
    <location>
        <begin position="1"/>
        <end position="130"/>
    </location>
</feature>
<feature type="topological domain" description="Cytoplasmic" evidence="1">
    <location>
        <begin position="1"/>
        <end position="5"/>
    </location>
</feature>
<feature type="transmembrane region" description="Helical" evidence="1">
    <location>
        <begin position="6"/>
        <end position="26"/>
    </location>
</feature>
<feature type="topological domain" description="Periplasmic" evidence="1">
    <location>
        <begin position="27"/>
        <end position="45"/>
    </location>
</feature>
<feature type="transmembrane region" description="Helical" evidence="1">
    <location>
        <begin position="46"/>
        <end position="66"/>
    </location>
</feature>
<feature type="topological domain" description="Cytoplasmic" evidence="1">
    <location>
        <begin position="67"/>
        <end position="70"/>
    </location>
</feature>
<feature type="transmembrane region" description="Helical" evidence="1">
    <location>
        <begin position="71"/>
        <end position="91"/>
    </location>
</feature>
<feature type="topological domain" description="Periplasmic" evidence="1">
    <location>
        <begin position="92"/>
        <end position="101"/>
    </location>
</feature>
<feature type="transmembrane region" description="Helical" evidence="1">
    <location>
        <begin position="102"/>
        <end position="122"/>
    </location>
</feature>
<feature type="topological domain" description="Cytoplasmic" evidence="1">
    <location>
        <begin position="123"/>
        <end position="130"/>
    </location>
</feature>
<sequence length="130" mass="14102">MKKLEDVGVLVARILMPILFITAGWGKITGYAGTQQYMEAMGVPGFMLPLVILLEFGGGLAILFGFLTRTTALFTAGFTLLTAFLFHSNFAEGVNSLMFMKNLTISGGFLLLAITGPGAYSIDRLLNKKW</sequence>
<keyword id="KW-0997">Cell inner membrane</keyword>
<keyword id="KW-1003">Cell membrane</keyword>
<keyword id="KW-0472">Membrane</keyword>
<keyword id="KW-1185">Reference proteome</keyword>
<keyword id="KW-0812">Transmembrane</keyword>
<keyword id="KW-1133">Transmembrane helix</keyword>
<proteinExistence type="evidence at protein level"/>
<evidence type="ECO:0000255" key="1"/>
<evidence type="ECO:0000305" key="2"/>
<gene>
    <name type="primary">yqjF</name>
    <name type="ordered locus">b3101</name>
    <name type="ordered locus">JW5850</name>
</gene>
<organism>
    <name type="scientific">Escherichia coli (strain K12)</name>
    <dbReference type="NCBI Taxonomy" id="83333"/>
    <lineage>
        <taxon>Bacteria</taxon>
        <taxon>Pseudomonadati</taxon>
        <taxon>Pseudomonadota</taxon>
        <taxon>Gammaproteobacteria</taxon>
        <taxon>Enterobacterales</taxon>
        <taxon>Enterobacteriaceae</taxon>
        <taxon>Escherichia</taxon>
    </lineage>
</organism>
<protein>
    <recommendedName>
        <fullName>Inner membrane protein YqjF</fullName>
    </recommendedName>
</protein>